<name>Y2358_MYCBO</name>
<keyword id="KW-1185">Reference proteome</keyword>
<protein>
    <recommendedName>
        <fullName>Uncharacterized protein Mb2358</fullName>
    </recommendedName>
</protein>
<reference key="1">
    <citation type="journal article" date="2003" name="Proc. Natl. Acad. Sci. U.S.A.">
        <title>The complete genome sequence of Mycobacterium bovis.</title>
        <authorList>
            <person name="Garnier T."/>
            <person name="Eiglmeier K."/>
            <person name="Camus J.-C."/>
            <person name="Medina N."/>
            <person name="Mansoor H."/>
            <person name="Pryor M."/>
            <person name="Duthoy S."/>
            <person name="Grondin S."/>
            <person name="Lacroix C."/>
            <person name="Monsempe C."/>
            <person name="Simon S."/>
            <person name="Harris B."/>
            <person name="Atkin R."/>
            <person name="Doggett J."/>
            <person name="Mayes R."/>
            <person name="Keating L."/>
            <person name="Wheeler P.R."/>
            <person name="Parkhill J."/>
            <person name="Barrell B.G."/>
            <person name="Cole S.T."/>
            <person name="Gordon S.V."/>
            <person name="Hewinson R.G."/>
        </authorList>
    </citation>
    <scope>NUCLEOTIDE SEQUENCE [LARGE SCALE GENOMIC DNA]</scope>
    <source>
        <strain>ATCC BAA-935 / AF2122/97</strain>
    </source>
</reference>
<reference key="2">
    <citation type="journal article" date="2017" name="Genome Announc.">
        <title>Updated reference genome sequence and annotation of Mycobacterium bovis AF2122/97.</title>
        <authorList>
            <person name="Malone K.M."/>
            <person name="Farrell D."/>
            <person name="Stuber T.P."/>
            <person name="Schubert O.T."/>
            <person name="Aebersold R."/>
            <person name="Robbe-Austerman S."/>
            <person name="Gordon S.V."/>
        </authorList>
    </citation>
    <scope>NUCLEOTIDE SEQUENCE [LARGE SCALE GENOMIC DNA]</scope>
    <scope>GENOME REANNOTATION</scope>
    <source>
        <strain>ATCC BAA-935 / AF2122/97</strain>
    </source>
</reference>
<sequence>MPPVFLPQIGRLTPDAVGEAIGIAADDIPMAARWIGSRPCSLIGQPNTMGDEMGYLGPGLAGQRCVDRLVMGASRSTCSRLPVIASVDERLSVLKPVRPRLHSISFIFKGRPGEVYLTVTGYNFRGVP</sequence>
<gene>
    <name type="ordered locus">BQ2027_MB2358</name>
</gene>
<dbReference type="EMBL" id="LT708304">
    <property type="protein sequence ID" value="SIU00970.1"/>
    <property type="molecule type" value="Genomic_DNA"/>
</dbReference>
<dbReference type="RefSeq" id="NP_856007.1">
    <property type="nucleotide sequence ID" value="NC_002945.3"/>
</dbReference>
<dbReference type="RefSeq" id="WP_003411975.1">
    <property type="nucleotide sequence ID" value="NC_002945.4"/>
</dbReference>
<dbReference type="KEGG" id="mbo:BQ2027_MB2358"/>
<dbReference type="PATRIC" id="fig|233413.5.peg.2586"/>
<dbReference type="Proteomes" id="UP000001419">
    <property type="component" value="Chromosome"/>
</dbReference>
<dbReference type="SUPFAM" id="SSF53706">
    <property type="entry name" value="Formate dehydrogenase/DMSO reductase, domains 1-3"/>
    <property type="match status" value="1"/>
</dbReference>
<proteinExistence type="predicted"/>
<feature type="chain" id="PRO_0000104031" description="Uncharacterized protein Mb2358">
    <location>
        <begin position="1"/>
        <end position="128"/>
    </location>
</feature>
<accession>P0A5G4</accession>
<accession>A0A1R3Y0X2</accession>
<accession>P71881</accession>
<accession>X2BKR9</accession>
<organism>
    <name type="scientific">Mycobacterium bovis (strain ATCC BAA-935 / AF2122/97)</name>
    <dbReference type="NCBI Taxonomy" id="233413"/>
    <lineage>
        <taxon>Bacteria</taxon>
        <taxon>Bacillati</taxon>
        <taxon>Actinomycetota</taxon>
        <taxon>Actinomycetes</taxon>
        <taxon>Mycobacteriales</taxon>
        <taxon>Mycobacteriaceae</taxon>
        <taxon>Mycobacterium</taxon>
        <taxon>Mycobacterium tuberculosis complex</taxon>
    </lineage>
</organism>